<protein>
    <recommendedName>
        <fullName evidence="1">NAD(P)H-quinone oxidoreductase subunit 3, chloroplastic</fullName>
        <ecNumber evidence="1">7.1.1.-</ecNumber>
    </recommendedName>
    <alternativeName>
        <fullName evidence="1">NAD(P)H dehydrogenase subunit 3</fullName>
    </alternativeName>
    <alternativeName>
        <fullName evidence="1">NADH-plastoquinone oxidoreductase subunit 3</fullName>
    </alternativeName>
</protein>
<proteinExistence type="inferred from homology"/>
<organism>
    <name type="scientific">Acorus calamus var. americanus</name>
    <name type="common">American sweet flag</name>
    <name type="synonym">Acorus americanus</name>
    <dbReference type="NCBI Taxonomy" id="263995"/>
    <lineage>
        <taxon>Eukaryota</taxon>
        <taxon>Viridiplantae</taxon>
        <taxon>Streptophyta</taxon>
        <taxon>Embryophyta</taxon>
        <taxon>Tracheophyta</taxon>
        <taxon>Spermatophyta</taxon>
        <taxon>Magnoliopsida</taxon>
        <taxon>Liliopsida</taxon>
        <taxon>Acoraceae</taxon>
        <taxon>Acorus</taxon>
    </lineage>
</organism>
<feature type="chain" id="PRO_0000362801" description="NAD(P)H-quinone oxidoreductase subunit 3, chloroplastic">
    <location>
        <begin position="1"/>
        <end position="120"/>
    </location>
</feature>
<feature type="transmembrane region" description="Helical" evidence="1">
    <location>
        <begin position="9"/>
        <end position="29"/>
    </location>
</feature>
<feature type="transmembrane region" description="Helical" evidence="1">
    <location>
        <begin position="64"/>
        <end position="84"/>
    </location>
</feature>
<feature type="transmembrane region" description="Helical" evidence="1">
    <location>
        <begin position="88"/>
        <end position="108"/>
    </location>
</feature>
<dbReference type="EC" id="7.1.1.-" evidence="1"/>
<dbReference type="EMBL" id="EU016712">
    <property type="protein sequence ID" value="ABU85153.1"/>
    <property type="molecule type" value="Genomic_DNA"/>
</dbReference>
<dbReference type="EMBL" id="EU273602">
    <property type="protein sequence ID" value="ABX38749.1"/>
    <property type="molecule type" value="Genomic_DNA"/>
</dbReference>
<dbReference type="RefSeq" id="YP_001586187.1">
    <property type="nucleotide sequence ID" value="NC_010093.1"/>
</dbReference>
<dbReference type="SMR" id="A9LYA6"/>
<dbReference type="GeneID" id="5777818"/>
<dbReference type="GO" id="GO:0009535">
    <property type="term" value="C:chloroplast thylakoid membrane"/>
    <property type="evidence" value="ECO:0007669"/>
    <property type="project" value="UniProtKB-SubCell"/>
</dbReference>
<dbReference type="GO" id="GO:0030964">
    <property type="term" value="C:NADH dehydrogenase complex"/>
    <property type="evidence" value="ECO:0007669"/>
    <property type="project" value="TreeGrafter"/>
</dbReference>
<dbReference type="GO" id="GO:0008137">
    <property type="term" value="F:NADH dehydrogenase (ubiquinone) activity"/>
    <property type="evidence" value="ECO:0007669"/>
    <property type="project" value="InterPro"/>
</dbReference>
<dbReference type="GO" id="GO:0048038">
    <property type="term" value="F:quinone binding"/>
    <property type="evidence" value="ECO:0007669"/>
    <property type="project" value="UniProtKB-KW"/>
</dbReference>
<dbReference type="GO" id="GO:0019684">
    <property type="term" value="P:photosynthesis, light reaction"/>
    <property type="evidence" value="ECO:0007669"/>
    <property type="project" value="UniProtKB-UniRule"/>
</dbReference>
<dbReference type="FunFam" id="1.20.58.1610:FF:000001">
    <property type="entry name" value="NAD(P)H-quinone oxidoreductase subunit 3, chloroplastic"/>
    <property type="match status" value="1"/>
</dbReference>
<dbReference type="Gene3D" id="1.20.58.1610">
    <property type="entry name" value="NADH:ubiquinone/plastoquinone oxidoreductase, chain 3"/>
    <property type="match status" value="1"/>
</dbReference>
<dbReference type="HAMAP" id="MF_01394">
    <property type="entry name" value="NDH1_NuoA"/>
    <property type="match status" value="1"/>
</dbReference>
<dbReference type="InterPro" id="IPR023043">
    <property type="entry name" value="NAD(P)H_OxRDtase_bac/plastid"/>
</dbReference>
<dbReference type="InterPro" id="IPR000440">
    <property type="entry name" value="NADH_UbQ/plastoQ_OxRdtase_su3"/>
</dbReference>
<dbReference type="InterPro" id="IPR038430">
    <property type="entry name" value="NDAH_ubi_oxred_su3_sf"/>
</dbReference>
<dbReference type="PANTHER" id="PTHR11058">
    <property type="entry name" value="NADH-UBIQUINONE OXIDOREDUCTASE CHAIN 3"/>
    <property type="match status" value="1"/>
</dbReference>
<dbReference type="PANTHER" id="PTHR11058:SF9">
    <property type="entry name" value="NADH-UBIQUINONE OXIDOREDUCTASE CHAIN 3"/>
    <property type="match status" value="1"/>
</dbReference>
<dbReference type="Pfam" id="PF00507">
    <property type="entry name" value="Oxidored_q4"/>
    <property type="match status" value="1"/>
</dbReference>
<accession>A9LYA6</accession>
<accession>A9QAR0</accession>
<evidence type="ECO:0000255" key="1">
    <source>
        <dbReference type="HAMAP-Rule" id="MF_01394"/>
    </source>
</evidence>
<gene>
    <name evidence="1" type="primary">ndhC</name>
</gene>
<keyword id="KW-0150">Chloroplast</keyword>
<keyword id="KW-0472">Membrane</keyword>
<keyword id="KW-0520">NAD</keyword>
<keyword id="KW-0521">NADP</keyword>
<keyword id="KW-0934">Plastid</keyword>
<keyword id="KW-0618">Plastoquinone</keyword>
<keyword id="KW-0874">Quinone</keyword>
<keyword id="KW-0793">Thylakoid</keyword>
<keyword id="KW-1278">Translocase</keyword>
<keyword id="KW-0812">Transmembrane</keyword>
<keyword id="KW-1133">Transmembrane helix</keyword>
<keyword id="KW-0813">Transport</keyword>
<reference key="1">
    <citation type="journal article" date="2007" name="Proc. Natl. Acad. Sci. U.S.A.">
        <title>Analysis of 81 genes from 64 plastid genomes resolves relationships in angiosperms and identifies genome-scale evolutionary patterns.</title>
        <authorList>
            <person name="Jansen R.K."/>
            <person name="Cai Z."/>
            <person name="Raubeson L.A."/>
            <person name="Daniell H."/>
            <person name="dePamphilis C.W."/>
            <person name="Leebens-Mack J."/>
            <person name="Muller K.F."/>
            <person name="Guisinger-Bellian M."/>
            <person name="Haberle R.C."/>
            <person name="Hansen A.K."/>
            <person name="Chumley T.W."/>
            <person name="Lee S.B."/>
            <person name="Peery R."/>
            <person name="McNeal J.R."/>
            <person name="Kuehl J.V."/>
            <person name="Boore J.L."/>
        </authorList>
    </citation>
    <scope>NUCLEOTIDE SEQUENCE [GENOMIC DNA]</scope>
</reference>
<reference key="2">
    <citation type="submission" date="2007-11" db="EMBL/GenBank/DDBJ databases">
        <title>The complete chloroplast genome of Acorus americanus.</title>
        <authorList>
            <person name="Peery R.M."/>
            <person name="Chumley T.W."/>
            <person name="Kuehl J.V."/>
            <person name="Boore J.L."/>
            <person name="Raubeson L.A."/>
        </authorList>
    </citation>
    <scope>NUCLEOTIDE SEQUENCE [LARGE SCALE GENOMIC DNA]</scope>
</reference>
<geneLocation type="chloroplast"/>
<comment type="function">
    <text evidence="1">NDH shuttles electrons from NAD(P)H:plastoquinone, via FMN and iron-sulfur (Fe-S) centers, to quinones in the photosynthetic chain and possibly in a chloroplast respiratory chain. The immediate electron acceptor for the enzyme in this species is believed to be plastoquinone. Couples the redox reaction to proton translocation, and thus conserves the redox energy in a proton gradient.</text>
</comment>
<comment type="catalytic activity">
    <reaction evidence="1">
        <text>a plastoquinone + NADH + (n+1) H(+)(in) = a plastoquinol + NAD(+) + n H(+)(out)</text>
        <dbReference type="Rhea" id="RHEA:42608"/>
        <dbReference type="Rhea" id="RHEA-COMP:9561"/>
        <dbReference type="Rhea" id="RHEA-COMP:9562"/>
        <dbReference type="ChEBI" id="CHEBI:15378"/>
        <dbReference type="ChEBI" id="CHEBI:17757"/>
        <dbReference type="ChEBI" id="CHEBI:57540"/>
        <dbReference type="ChEBI" id="CHEBI:57945"/>
        <dbReference type="ChEBI" id="CHEBI:62192"/>
    </reaction>
</comment>
<comment type="catalytic activity">
    <reaction evidence="1">
        <text>a plastoquinone + NADPH + (n+1) H(+)(in) = a plastoquinol + NADP(+) + n H(+)(out)</text>
        <dbReference type="Rhea" id="RHEA:42612"/>
        <dbReference type="Rhea" id="RHEA-COMP:9561"/>
        <dbReference type="Rhea" id="RHEA-COMP:9562"/>
        <dbReference type="ChEBI" id="CHEBI:15378"/>
        <dbReference type="ChEBI" id="CHEBI:17757"/>
        <dbReference type="ChEBI" id="CHEBI:57783"/>
        <dbReference type="ChEBI" id="CHEBI:58349"/>
        <dbReference type="ChEBI" id="CHEBI:62192"/>
    </reaction>
</comment>
<comment type="subunit">
    <text evidence="1">NDH is composed of at least 16 different subunits, 5 of which are encoded in the nucleus.</text>
</comment>
<comment type="subcellular location">
    <subcellularLocation>
        <location evidence="1">Plastid</location>
        <location evidence="1">Chloroplast thylakoid membrane</location>
        <topology evidence="1">Multi-pass membrane protein</topology>
    </subcellularLocation>
</comment>
<comment type="similarity">
    <text evidence="1">Belongs to the complex I subunit 3 family.</text>
</comment>
<sequence length="120" mass="13768">MFLLHEYDIFWAFLLISSVIPILAFLISGVLAPTREGPEKLSSYESGIEPIGDAWVQFRIRYYMFALVFVVFDVETVFLYPWAMSFDVLGVSVFLEALIFVLILIVGSVYAWRKGALEWS</sequence>
<name>NU3C_ACOCI</name>